<comment type="subunit">
    <text evidence="1">Forms oligomers.</text>
</comment>
<comment type="subcellular location">
    <subcellularLocation>
        <location evidence="1">Cytoplasm</location>
        <location evidence="1">Nucleoid</location>
    </subcellularLocation>
</comment>
<comment type="similarity">
    <text evidence="1">Belongs to the MraZ family.</text>
</comment>
<keyword id="KW-0963">Cytoplasm</keyword>
<keyword id="KW-0238">DNA-binding</keyword>
<keyword id="KW-0677">Repeat</keyword>
<keyword id="KW-0804">Transcription</keyword>
<keyword id="KW-0805">Transcription regulation</keyword>
<feature type="chain" id="PRO_1000134780" description="Transcriptional regulator MraZ">
    <location>
        <begin position="1"/>
        <end position="150"/>
    </location>
</feature>
<feature type="domain" description="SpoVT-AbrB 1" evidence="2">
    <location>
        <begin position="7"/>
        <end position="58"/>
    </location>
</feature>
<feature type="domain" description="SpoVT-AbrB 2" evidence="2">
    <location>
        <begin position="87"/>
        <end position="130"/>
    </location>
</feature>
<sequence>MAGFIGKEQHSIDEKGRFMIPARFRKLLGDGKEARAKGAIFYVMKAFDGSLELYEPEIWAEKEKGLMSLSDFNPDERMLKTMMYERLDSVEMDRQGRIALPKDFLLHAAIVKDIVIIGANVKMILWSPEKLTSMIRESGTRFQVLAGRYF</sequence>
<protein>
    <recommendedName>
        <fullName>Transcriptional regulator MraZ</fullName>
    </recommendedName>
</protein>
<reference key="1">
    <citation type="submission" date="2008-06" db="EMBL/GenBank/DDBJ databases">
        <title>Complete sequence of Chlorobium phaeobacteroides BS1.</title>
        <authorList>
            <consortium name="US DOE Joint Genome Institute"/>
            <person name="Lucas S."/>
            <person name="Copeland A."/>
            <person name="Lapidus A."/>
            <person name="Glavina del Rio T."/>
            <person name="Dalin E."/>
            <person name="Tice H."/>
            <person name="Bruce D."/>
            <person name="Goodwin L."/>
            <person name="Pitluck S."/>
            <person name="Schmutz J."/>
            <person name="Larimer F."/>
            <person name="Land M."/>
            <person name="Hauser L."/>
            <person name="Kyrpides N."/>
            <person name="Ovchinnikova G."/>
            <person name="Li T."/>
            <person name="Liu Z."/>
            <person name="Zhao F."/>
            <person name="Overmann J."/>
            <person name="Bryant D.A."/>
            <person name="Richardson P."/>
        </authorList>
    </citation>
    <scope>NUCLEOTIDE SEQUENCE [LARGE SCALE GENOMIC DNA]</scope>
    <source>
        <strain>BS1</strain>
    </source>
</reference>
<organism>
    <name type="scientific">Chlorobium phaeobacteroides (strain BS1)</name>
    <dbReference type="NCBI Taxonomy" id="331678"/>
    <lineage>
        <taxon>Bacteria</taxon>
        <taxon>Pseudomonadati</taxon>
        <taxon>Chlorobiota</taxon>
        <taxon>Chlorobiia</taxon>
        <taxon>Chlorobiales</taxon>
        <taxon>Chlorobiaceae</taxon>
        <taxon>Chlorobium/Pelodictyon group</taxon>
        <taxon>Chlorobium</taxon>
    </lineage>
</organism>
<gene>
    <name evidence="1" type="primary">mraZ</name>
    <name type="ordered locus">Cphamn1_2531</name>
</gene>
<dbReference type="EMBL" id="CP001101">
    <property type="protein sequence ID" value="ACE05425.1"/>
    <property type="molecule type" value="Genomic_DNA"/>
</dbReference>
<dbReference type="SMR" id="B3EQC7"/>
<dbReference type="STRING" id="331678.Cphamn1_2531"/>
<dbReference type="KEGG" id="cpb:Cphamn1_2531"/>
<dbReference type="eggNOG" id="COG2001">
    <property type="taxonomic scope" value="Bacteria"/>
</dbReference>
<dbReference type="HOGENOM" id="CLU_107907_0_5_10"/>
<dbReference type="OrthoDB" id="9807753at2"/>
<dbReference type="GO" id="GO:0005737">
    <property type="term" value="C:cytoplasm"/>
    <property type="evidence" value="ECO:0007669"/>
    <property type="project" value="UniProtKB-UniRule"/>
</dbReference>
<dbReference type="GO" id="GO:0009295">
    <property type="term" value="C:nucleoid"/>
    <property type="evidence" value="ECO:0007669"/>
    <property type="project" value="UniProtKB-SubCell"/>
</dbReference>
<dbReference type="GO" id="GO:0003700">
    <property type="term" value="F:DNA-binding transcription factor activity"/>
    <property type="evidence" value="ECO:0007669"/>
    <property type="project" value="UniProtKB-UniRule"/>
</dbReference>
<dbReference type="GO" id="GO:0000976">
    <property type="term" value="F:transcription cis-regulatory region binding"/>
    <property type="evidence" value="ECO:0007669"/>
    <property type="project" value="TreeGrafter"/>
</dbReference>
<dbReference type="GO" id="GO:2000143">
    <property type="term" value="P:negative regulation of DNA-templated transcription initiation"/>
    <property type="evidence" value="ECO:0007669"/>
    <property type="project" value="TreeGrafter"/>
</dbReference>
<dbReference type="CDD" id="cd16321">
    <property type="entry name" value="MraZ_C"/>
    <property type="match status" value="1"/>
</dbReference>
<dbReference type="CDD" id="cd16320">
    <property type="entry name" value="MraZ_N"/>
    <property type="match status" value="1"/>
</dbReference>
<dbReference type="Gene3D" id="3.40.1550.20">
    <property type="entry name" value="Transcriptional regulator MraZ domain"/>
    <property type="match status" value="1"/>
</dbReference>
<dbReference type="HAMAP" id="MF_01008">
    <property type="entry name" value="MraZ"/>
    <property type="match status" value="1"/>
</dbReference>
<dbReference type="InterPro" id="IPR003444">
    <property type="entry name" value="MraZ"/>
</dbReference>
<dbReference type="InterPro" id="IPR035644">
    <property type="entry name" value="MraZ_C"/>
</dbReference>
<dbReference type="InterPro" id="IPR020603">
    <property type="entry name" value="MraZ_dom"/>
</dbReference>
<dbReference type="InterPro" id="IPR035642">
    <property type="entry name" value="MraZ_N"/>
</dbReference>
<dbReference type="InterPro" id="IPR038619">
    <property type="entry name" value="MraZ_sf"/>
</dbReference>
<dbReference type="InterPro" id="IPR007159">
    <property type="entry name" value="SpoVT-AbrB_dom"/>
</dbReference>
<dbReference type="InterPro" id="IPR037914">
    <property type="entry name" value="SpoVT-AbrB_sf"/>
</dbReference>
<dbReference type="NCBIfam" id="NF001476">
    <property type="entry name" value="PRK00326.2-2"/>
    <property type="match status" value="1"/>
</dbReference>
<dbReference type="PANTHER" id="PTHR34701">
    <property type="entry name" value="TRANSCRIPTIONAL REGULATOR MRAZ"/>
    <property type="match status" value="1"/>
</dbReference>
<dbReference type="PANTHER" id="PTHR34701:SF1">
    <property type="entry name" value="TRANSCRIPTIONAL REGULATOR MRAZ"/>
    <property type="match status" value="1"/>
</dbReference>
<dbReference type="Pfam" id="PF02381">
    <property type="entry name" value="MraZ"/>
    <property type="match status" value="2"/>
</dbReference>
<dbReference type="SUPFAM" id="SSF89447">
    <property type="entry name" value="AbrB/MazE/MraZ-like"/>
    <property type="match status" value="1"/>
</dbReference>
<dbReference type="PROSITE" id="PS51740">
    <property type="entry name" value="SPOVT_ABRB"/>
    <property type="match status" value="2"/>
</dbReference>
<evidence type="ECO:0000255" key="1">
    <source>
        <dbReference type="HAMAP-Rule" id="MF_01008"/>
    </source>
</evidence>
<evidence type="ECO:0000255" key="2">
    <source>
        <dbReference type="PROSITE-ProRule" id="PRU01076"/>
    </source>
</evidence>
<accession>B3EQC7</accession>
<name>MRAZ_CHLPB</name>
<proteinExistence type="inferred from homology"/>